<reference key="1">
    <citation type="journal article" date="1995" name="Mol. Gen. Genet.">
        <title>Cloning, nucleotide sequence, and transcriptional analysis of the nusG gene of Streptomyces coelicolor A3(2), which encodes a putative transcriptional antiterminator.</title>
        <authorList>
            <person name="Puttikhunt C."/>
            <person name="Nihira T."/>
            <person name="Yamada Y."/>
        </authorList>
    </citation>
    <scope>NUCLEOTIDE SEQUENCE [GENOMIC DNA]</scope>
    <source>
        <strain>A3(2) / NRRL B-16638</strain>
    </source>
</reference>
<reference key="2">
    <citation type="journal article" date="2002" name="Nature">
        <title>Complete genome sequence of the model actinomycete Streptomyces coelicolor A3(2).</title>
        <authorList>
            <person name="Bentley S.D."/>
            <person name="Chater K.F."/>
            <person name="Cerdeno-Tarraga A.-M."/>
            <person name="Challis G.L."/>
            <person name="Thomson N.R."/>
            <person name="James K.D."/>
            <person name="Harris D.E."/>
            <person name="Quail M.A."/>
            <person name="Kieser H."/>
            <person name="Harper D."/>
            <person name="Bateman A."/>
            <person name="Brown S."/>
            <person name="Chandra G."/>
            <person name="Chen C.W."/>
            <person name="Collins M."/>
            <person name="Cronin A."/>
            <person name="Fraser A."/>
            <person name="Goble A."/>
            <person name="Hidalgo J."/>
            <person name="Hornsby T."/>
            <person name="Howarth S."/>
            <person name="Huang C.-H."/>
            <person name="Kieser T."/>
            <person name="Larke L."/>
            <person name="Murphy L.D."/>
            <person name="Oliver K."/>
            <person name="O'Neil S."/>
            <person name="Rabbinowitsch E."/>
            <person name="Rajandream M.A."/>
            <person name="Rutherford K.M."/>
            <person name="Rutter S."/>
            <person name="Seeger K."/>
            <person name="Saunders D."/>
            <person name="Sharp S."/>
            <person name="Squares R."/>
            <person name="Squares S."/>
            <person name="Taylor K."/>
            <person name="Warren T."/>
            <person name="Wietzorrek A."/>
            <person name="Woodward J.R."/>
            <person name="Barrell B.G."/>
            <person name="Parkhill J."/>
            <person name="Hopwood D.A."/>
        </authorList>
    </citation>
    <scope>NUCLEOTIDE SEQUENCE [LARGE SCALE GENOMIC DNA]</scope>
    <source>
        <strain>ATCC BAA-471 / A3(2) / M145</strain>
    </source>
</reference>
<name>RL11_STRCO</name>
<keyword id="KW-0488">Methylation</keyword>
<keyword id="KW-1185">Reference proteome</keyword>
<keyword id="KW-0687">Ribonucleoprotein</keyword>
<keyword id="KW-0689">Ribosomal protein</keyword>
<keyword id="KW-0694">RNA-binding</keyword>
<keyword id="KW-0699">rRNA-binding</keyword>
<proteinExistence type="inferred from homology"/>
<protein>
    <recommendedName>
        <fullName evidence="1">Large ribosomal subunit protein uL11</fullName>
    </recommendedName>
    <alternativeName>
        <fullName evidence="2">50S ribosomal protein L11</fullName>
    </alternativeName>
</protein>
<sequence length="144" mass="15394">MPPKKKKVTGLIKLQIQAGAANPAPPVGPALGQHGVNIMEFCKAYNAATESQRGWVIPVEITVYEDRSFTFITKTPPAAKMILKAAGVEKGSGEPHKTKVAKITRDQVREIATTKMPDLNANDLDQAEKIIAGTARSMGVTVEG</sequence>
<feature type="chain" id="PRO_0000104377" description="Large ribosomal subunit protein uL11">
    <location>
        <begin position="1"/>
        <end position="144"/>
    </location>
</feature>
<evidence type="ECO:0000255" key="1">
    <source>
        <dbReference type="HAMAP-Rule" id="MF_00736"/>
    </source>
</evidence>
<evidence type="ECO:0000305" key="2"/>
<dbReference type="EMBL" id="D32254">
    <property type="protein sequence ID" value="BAA06986.1"/>
    <property type="molecule type" value="Genomic_DNA"/>
</dbReference>
<dbReference type="EMBL" id="AB005915">
    <property type="protein sequence ID" value="BAA31982.1"/>
    <property type="molecule type" value="Genomic_DNA"/>
</dbReference>
<dbReference type="EMBL" id="AL939120">
    <property type="protein sequence ID" value="CAB77422.1"/>
    <property type="molecule type" value="Genomic_DNA"/>
</dbReference>
<dbReference type="PIR" id="S54718">
    <property type="entry name" value="S54718"/>
</dbReference>
<dbReference type="RefSeq" id="NP_628809.1">
    <property type="nucleotide sequence ID" value="NC_003888.3"/>
</dbReference>
<dbReference type="RefSeq" id="WP_003974315.1">
    <property type="nucleotide sequence ID" value="NZ_VNID01000028.1"/>
</dbReference>
<dbReference type="SMR" id="P0A463"/>
<dbReference type="FunCoup" id="P0A463">
    <property type="interactions" value="491"/>
</dbReference>
<dbReference type="STRING" id="100226.gene:17762297"/>
<dbReference type="PaxDb" id="100226-SCO4648"/>
<dbReference type="GeneID" id="97463005"/>
<dbReference type="KEGG" id="sco:SCO4648"/>
<dbReference type="PATRIC" id="fig|100226.15.peg.4719"/>
<dbReference type="eggNOG" id="COG0080">
    <property type="taxonomic scope" value="Bacteria"/>
</dbReference>
<dbReference type="HOGENOM" id="CLU_074237_2_1_11"/>
<dbReference type="InParanoid" id="P0A463"/>
<dbReference type="OrthoDB" id="9802408at2"/>
<dbReference type="PhylomeDB" id="P0A463"/>
<dbReference type="Proteomes" id="UP000001973">
    <property type="component" value="Chromosome"/>
</dbReference>
<dbReference type="GO" id="GO:0022625">
    <property type="term" value="C:cytosolic large ribosomal subunit"/>
    <property type="evidence" value="ECO:0000318"/>
    <property type="project" value="GO_Central"/>
</dbReference>
<dbReference type="GO" id="GO:0070180">
    <property type="term" value="F:large ribosomal subunit rRNA binding"/>
    <property type="evidence" value="ECO:0000318"/>
    <property type="project" value="GO_Central"/>
</dbReference>
<dbReference type="GO" id="GO:0003735">
    <property type="term" value="F:structural constituent of ribosome"/>
    <property type="evidence" value="ECO:0000315"/>
    <property type="project" value="CACAO"/>
</dbReference>
<dbReference type="GO" id="GO:0006412">
    <property type="term" value="P:translation"/>
    <property type="evidence" value="ECO:0000318"/>
    <property type="project" value="GO_Central"/>
</dbReference>
<dbReference type="CDD" id="cd00349">
    <property type="entry name" value="Ribosomal_L11"/>
    <property type="match status" value="1"/>
</dbReference>
<dbReference type="FunFam" id="1.10.10.250:FF:000001">
    <property type="entry name" value="50S ribosomal protein L11"/>
    <property type="match status" value="1"/>
</dbReference>
<dbReference type="FunFam" id="3.30.1550.10:FF:000001">
    <property type="entry name" value="50S ribosomal protein L11"/>
    <property type="match status" value="1"/>
</dbReference>
<dbReference type="Gene3D" id="1.10.10.250">
    <property type="entry name" value="Ribosomal protein L11, C-terminal domain"/>
    <property type="match status" value="1"/>
</dbReference>
<dbReference type="Gene3D" id="3.30.1550.10">
    <property type="entry name" value="Ribosomal protein L11/L12, N-terminal domain"/>
    <property type="match status" value="1"/>
</dbReference>
<dbReference type="HAMAP" id="MF_00736">
    <property type="entry name" value="Ribosomal_uL11"/>
    <property type="match status" value="1"/>
</dbReference>
<dbReference type="InterPro" id="IPR000911">
    <property type="entry name" value="Ribosomal_uL11"/>
</dbReference>
<dbReference type="InterPro" id="IPR006519">
    <property type="entry name" value="Ribosomal_uL11_bac-typ"/>
</dbReference>
<dbReference type="InterPro" id="IPR020783">
    <property type="entry name" value="Ribosomal_uL11_C"/>
</dbReference>
<dbReference type="InterPro" id="IPR036769">
    <property type="entry name" value="Ribosomal_uL11_C_sf"/>
</dbReference>
<dbReference type="InterPro" id="IPR020785">
    <property type="entry name" value="Ribosomal_uL11_CS"/>
</dbReference>
<dbReference type="InterPro" id="IPR020784">
    <property type="entry name" value="Ribosomal_uL11_N"/>
</dbReference>
<dbReference type="InterPro" id="IPR036796">
    <property type="entry name" value="Ribosomal_uL11_N_sf"/>
</dbReference>
<dbReference type="NCBIfam" id="TIGR01632">
    <property type="entry name" value="L11_bact"/>
    <property type="match status" value="1"/>
</dbReference>
<dbReference type="PANTHER" id="PTHR11661">
    <property type="entry name" value="60S RIBOSOMAL PROTEIN L12"/>
    <property type="match status" value="1"/>
</dbReference>
<dbReference type="PANTHER" id="PTHR11661:SF1">
    <property type="entry name" value="LARGE RIBOSOMAL SUBUNIT PROTEIN UL11M"/>
    <property type="match status" value="1"/>
</dbReference>
<dbReference type="Pfam" id="PF00298">
    <property type="entry name" value="Ribosomal_L11"/>
    <property type="match status" value="1"/>
</dbReference>
<dbReference type="Pfam" id="PF03946">
    <property type="entry name" value="Ribosomal_L11_N"/>
    <property type="match status" value="1"/>
</dbReference>
<dbReference type="SMART" id="SM00649">
    <property type="entry name" value="RL11"/>
    <property type="match status" value="1"/>
</dbReference>
<dbReference type="SUPFAM" id="SSF54747">
    <property type="entry name" value="Ribosomal L11/L12e N-terminal domain"/>
    <property type="match status" value="1"/>
</dbReference>
<dbReference type="SUPFAM" id="SSF46906">
    <property type="entry name" value="Ribosomal protein L11, C-terminal domain"/>
    <property type="match status" value="1"/>
</dbReference>
<dbReference type="PROSITE" id="PS00359">
    <property type="entry name" value="RIBOSOMAL_L11"/>
    <property type="match status" value="1"/>
</dbReference>
<gene>
    <name evidence="1" type="primary">rplK</name>
    <name type="ordered locus">SCO4648</name>
    <name type="ORF">SCD82.19</name>
</gene>
<organism>
    <name type="scientific">Streptomyces coelicolor (strain ATCC BAA-471 / A3(2) / M145)</name>
    <dbReference type="NCBI Taxonomy" id="100226"/>
    <lineage>
        <taxon>Bacteria</taxon>
        <taxon>Bacillati</taxon>
        <taxon>Actinomycetota</taxon>
        <taxon>Actinomycetes</taxon>
        <taxon>Kitasatosporales</taxon>
        <taxon>Streptomycetaceae</taxon>
        <taxon>Streptomyces</taxon>
        <taxon>Streptomyces albidoflavus group</taxon>
    </lineage>
</organism>
<accession>P0A463</accession>
<accession>P48954</accession>
<comment type="function">
    <text evidence="1">Forms part of the ribosomal stalk which helps the ribosome interact with GTP-bound translation factors.</text>
</comment>
<comment type="subunit">
    <text evidence="1">Part of the ribosomal stalk of the 50S ribosomal subunit. Interacts with L10 and the large rRNA to form the base of the stalk. L10 forms an elongated spine to which L12 dimers bind in a sequential fashion forming a multimeric L10(L12)X complex.</text>
</comment>
<comment type="PTM">
    <text evidence="1">One or more lysine residues are methylated.</text>
</comment>
<comment type="similarity">
    <text evidence="1">Belongs to the universal ribosomal protein uL11 family.</text>
</comment>